<keyword id="KW-0963">Cytoplasm</keyword>
<keyword id="KW-0238">DNA-binding</keyword>
<keyword id="KW-1185">Reference proteome</keyword>
<protein>
    <recommendedName>
        <fullName evidence="1">Nucleoid-associated protein BMA1360</fullName>
    </recommendedName>
</protein>
<reference key="1">
    <citation type="journal article" date="2004" name="Proc. Natl. Acad. Sci. U.S.A.">
        <title>Structural flexibility in the Burkholderia mallei genome.</title>
        <authorList>
            <person name="Nierman W.C."/>
            <person name="DeShazer D."/>
            <person name="Kim H.S."/>
            <person name="Tettelin H."/>
            <person name="Nelson K.E."/>
            <person name="Feldblyum T.V."/>
            <person name="Ulrich R.L."/>
            <person name="Ronning C.M."/>
            <person name="Brinkac L.M."/>
            <person name="Daugherty S.C."/>
            <person name="Davidsen T.D."/>
            <person name="DeBoy R.T."/>
            <person name="Dimitrov G."/>
            <person name="Dodson R.J."/>
            <person name="Durkin A.S."/>
            <person name="Gwinn M.L."/>
            <person name="Haft D.H."/>
            <person name="Khouri H.M."/>
            <person name="Kolonay J.F."/>
            <person name="Madupu R."/>
            <person name="Mohammoud Y."/>
            <person name="Nelson W.C."/>
            <person name="Radune D."/>
            <person name="Romero C.M."/>
            <person name="Sarria S."/>
            <person name="Selengut J."/>
            <person name="Shamblin C."/>
            <person name="Sullivan S.A."/>
            <person name="White O."/>
            <person name="Yu Y."/>
            <person name="Zafar N."/>
            <person name="Zhou L."/>
            <person name="Fraser C.M."/>
        </authorList>
    </citation>
    <scope>NUCLEOTIDE SEQUENCE [LARGE SCALE GENOMIC DNA]</scope>
    <source>
        <strain>ATCC 23344</strain>
    </source>
</reference>
<evidence type="ECO:0000255" key="1">
    <source>
        <dbReference type="HAMAP-Rule" id="MF_00274"/>
    </source>
</evidence>
<evidence type="ECO:0000256" key="2">
    <source>
        <dbReference type="SAM" id="MobiDB-lite"/>
    </source>
</evidence>
<dbReference type="EMBL" id="CP000010">
    <property type="protein sequence ID" value="AAU47588.1"/>
    <property type="molecule type" value="Genomic_DNA"/>
</dbReference>
<dbReference type="RefSeq" id="WP_004192342.1">
    <property type="nucleotide sequence ID" value="NC_006348.1"/>
</dbReference>
<dbReference type="RefSeq" id="YP_103020.1">
    <property type="nucleotide sequence ID" value="NC_006348.1"/>
</dbReference>
<dbReference type="SMR" id="Q62JU9"/>
<dbReference type="KEGG" id="bma:BMA1360"/>
<dbReference type="PATRIC" id="fig|243160.12.peg.1400"/>
<dbReference type="eggNOG" id="COG0718">
    <property type="taxonomic scope" value="Bacteria"/>
</dbReference>
<dbReference type="HOGENOM" id="CLU_140930_0_0_4"/>
<dbReference type="Proteomes" id="UP000006693">
    <property type="component" value="Chromosome 1"/>
</dbReference>
<dbReference type="GO" id="GO:0043590">
    <property type="term" value="C:bacterial nucleoid"/>
    <property type="evidence" value="ECO:0007669"/>
    <property type="project" value="UniProtKB-UniRule"/>
</dbReference>
<dbReference type="GO" id="GO:0005829">
    <property type="term" value="C:cytosol"/>
    <property type="evidence" value="ECO:0007669"/>
    <property type="project" value="TreeGrafter"/>
</dbReference>
<dbReference type="GO" id="GO:0003677">
    <property type="term" value="F:DNA binding"/>
    <property type="evidence" value="ECO:0007669"/>
    <property type="project" value="UniProtKB-UniRule"/>
</dbReference>
<dbReference type="FunFam" id="3.30.1310.10:FF:000001">
    <property type="entry name" value="Nucleoid-associated protein YbaB"/>
    <property type="match status" value="1"/>
</dbReference>
<dbReference type="Gene3D" id="3.30.1310.10">
    <property type="entry name" value="Nucleoid-associated protein YbaB-like domain"/>
    <property type="match status" value="1"/>
</dbReference>
<dbReference type="HAMAP" id="MF_00274">
    <property type="entry name" value="DNA_YbaB_EbfC"/>
    <property type="match status" value="1"/>
</dbReference>
<dbReference type="InterPro" id="IPR036894">
    <property type="entry name" value="YbaB-like_sf"/>
</dbReference>
<dbReference type="InterPro" id="IPR004401">
    <property type="entry name" value="YbaB/EbfC"/>
</dbReference>
<dbReference type="NCBIfam" id="TIGR00103">
    <property type="entry name" value="DNA_YbaB_EbfC"/>
    <property type="match status" value="1"/>
</dbReference>
<dbReference type="PANTHER" id="PTHR33449">
    <property type="entry name" value="NUCLEOID-ASSOCIATED PROTEIN YBAB"/>
    <property type="match status" value="1"/>
</dbReference>
<dbReference type="PANTHER" id="PTHR33449:SF1">
    <property type="entry name" value="NUCLEOID-ASSOCIATED PROTEIN YBAB"/>
    <property type="match status" value="1"/>
</dbReference>
<dbReference type="Pfam" id="PF02575">
    <property type="entry name" value="YbaB_DNA_bd"/>
    <property type="match status" value="1"/>
</dbReference>
<dbReference type="PIRSF" id="PIRSF004555">
    <property type="entry name" value="UCP004555"/>
    <property type="match status" value="1"/>
</dbReference>
<dbReference type="SUPFAM" id="SSF82607">
    <property type="entry name" value="YbaB-like"/>
    <property type="match status" value="1"/>
</dbReference>
<accession>Q62JU9</accession>
<organism>
    <name type="scientific">Burkholderia mallei (strain ATCC 23344)</name>
    <dbReference type="NCBI Taxonomy" id="243160"/>
    <lineage>
        <taxon>Bacteria</taxon>
        <taxon>Pseudomonadati</taxon>
        <taxon>Pseudomonadota</taxon>
        <taxon>Betaproteobacteria</taxon>
        <taxon>Burkholderiales</taxon>
        <taxon>Burkholderiaceae</taxon>
        <taxon>Burkholderia</taxon>
        <taxon>pseudomallei group</taxon>
    </lineage>
</organism>
<feature type="chain" id="PRO_1000003704" description="Nucleoid-associated protein BMA1360">
    <location>
        <begin position="1"/>
        <end position="108"/>
    </location>
</feature>
<feature type="region of interest" description="Disordered" evidence="2">
    <location>
        <begin position="84"/>
        <end position="108"/>
    </location>
</feature>
<feature type="compositionally biased region" description="Polar residues" evidence="2">
    <location>
        <begin position="85"/>
        <end position="95"/>
    </location>
</feature>
<feature type="compositionally biased region" description="Pro residues" evidence="2">
    <location>
        <begin position="99"/>
        <end position="108"/>
    </location>
</feature>
<comment type="function">
    <text evidence="1">Binds to DNA and alters its conformation. May be involved in regulation of gene expression, nucleoid organization and DNA protection.</text>
</comment>
<comment type="subunit">
    <text evidence="1">Homodimer.</text>
</comment>
<comment type="subcellular location">
    <subcellularLocation>
        <location evidence="1">Cytoplasm</location>
        <location evidence="1">Nucleoid</location>
    </subcellularLocation>
</comment>
<comment type="similarity">
    <text evidence="1">Belongs to the YbaB/EbfC family.</text>
</comment>
<sequence>MMKGQLAGLMKQAQQMQENMKKMQEQLALIEVEGQSGAGLVKVTMTCRNEVRRVAIDPSLLADDKDMLEDLVAAAFNDAVRKAEATSQEKMSGMTSGLPLPPGFKLPF</sequence>
<proteinExistence type="inferred from homology"/>
<name>Y1360_BURMA</name>
<gene>
    <name type="ordered locus">BMA1360</name>
</gene>